<evidence type="ECO:0000255" key="1">
    <source>
        <dbReference type="HAMAP-Rule" id="MF_00009"/>
    </source>
</evidence>
<feature type="chain" id="PRO_1000199988" description="Endoribonuclease YbeY">
    <location>
        <begin position="1"/>
        <end position="148"/>
    </location>
</feature>
<feature type="binding site" evidence="1">
    <location>
        <position position="102"/>
    </location>
    <ligand>
        <name>Zn(2+)</name>
        <dbReference type="ChEBI" id="CHEBI:29105"/>
        <note>catalytic</note>
    </ligand>
</feature>
<feature type="binding site" evidence="1">
    <location>
        <position position="106"/>
    </location>
    <ligand>
        <name>Zn(2+)</name>
        <dbReference type="ChEBI" id="CHEBI:29105"/>
        <note>catalytic</note>
    </ligand>
</feature>
<feature type="binding site" evidence="1">
    <location>
        <position position="112"/>
    </location>
    <ligand>
        <name>Zn(2+)</name>
        <dbReference type="ChEBI" id="CHEBI:29105"/>
        <note>catalytic</note>
    </ligand>
</feature>
<organism>
    <name type="scientific">Phytoplasma mali (strain AT)</name>
    <dbReference type="NCBI Taxonomy" id="482235"/>
    <lineage>
        <taxon>Bacteria</taxon>
        <taxon>Bacillati</taxon>
        <taxon>Mycoplasmatota</taxon>
        <taxon>Mollicutes</taxon>
        <taxon>Acholeplasmatales</taxon>
        <taxon>Acholeplasmataceae</taxon>
        <taxon>Candidatus Phytoplasma</taxon>
        <taxon>16SrX (Apple proliferation group)</taxon>
    </lineage>
</organism>
<proteinExistence type="inferred from homology"/>
<keyword id="KW-0963">Cytoplasm</keyword>
<keyword id="KW-0255">Endonuclease</keyword>
<keyword id="KW-0378">Hydrolase</keyword>
<keyword id="KW-0479">Metal-binding</keyword>
<keyword id="KW-0540">Nuclease</keyword>
<keyword id="KW-1185">Reference proteome</keyword>
<keyword id="KW-0690">Ribosome biogenesis</keyword>
<keyword id="KW-0698">rRNA processing</keyword>
<keyword id="KW-0862">Zinc</keyword>
<sequence>MKIKIHNKTNISIKYLTKILKKIFFFVPERQNIHIIFITPLKMKKMNFYYRQKDYDTDVLSFINEIDKDSLGDIFINLKKAQKQSQNYNHSLSREVCFLATHGYLHLKGYEHHSKDELKKMLIIQEKMLKKVDLDKKIISKNKKNNND</sequence>
<gene>
    <name evidence="1" type="primary">ybeY</name>
    <name type="ordered locus">ATP_00301</name>
</gene>
<accession>B3QZV1</accession>
<name>YBEY_PHYMT</name>
<comment type="function">
    <text evidence="1">Single strand-specific metallo-endoribonuclease involved in late-stage 70S ribosome quality control and in maturation of the 3' terminus of the 16S rRNA.</text>
</comment>
<comment type="cofactor">
    <cofactor evidence="1">
        <name>Zn(2+)</name>
        <dbReference type="ChEBI" id="CHEBI:29105"/>
    </cofactor>
    <text evidence="1">Binds 1 zinc ion.</text>
</comment>
<comment type="subcellular location">
    <subcellularLocation>
        <location evidence="1">Cytoplasm</location>
    </subcellularLocation>
</comment>
<comment type="similarity">
    <text evidence="1">Belongs to the endoribonuclease YbeY family.</text>
</comment>
<dbReference type="EC" id="3.1.-.-" evidence="1"/>
<dbReference type="EMBL" id="CU469464">
    <property type="protein sequence ID" value="CAP18488.1"/>
    <property type="molecule type" value="Genomic_DNA"/>
</dbReference>
<dbReference type="SMR" id="B3QZV1"/>
<dbReference type="STRING" id="37692.ATP_00301"/>
<dbReference type="KEGG" id="pml:ATP_00301"/>
<dbReference type="eggNOG" id="COG0319">
    <property type="taxonomic scope" value="Bacteria"/>
</dbReference>
<dbReference type="HOGENOM" id="CLU_106710_3_0_14"/>
<dbReference type="Proteomes" id="UP000002020">
    <property type="component" value="Chromosome"/>
</dbReference>
<dbReference type="GO" id="GO:0005737">
    <property type="term" value="C:cytoplasm"/>
    <property type="evidence" value="ECO:0007669"/>
    <property type="project" value="UniProtKB-SubCell"/>
</dbReference>
<dbReference type="GO" id="GO:0004222">
    <property type="term" value="F:metalloendopeptidase activity"/>
    <property type="evidence" value="ECO:0007669"/>
    <property type="project" value="InterPro"/>
</dbReference>
<dbReference type="GO" id="GO:0004521">
    <property type="term" value="F:RNA endonuclease activity"/>
    <property type="evidence" value="ECO:0007669"/>
    <property type="project" value="UniProtKB-UniRule"/>
</dbReference>
<dbReference type="GO" id="GO:0008270">
    <property type="term" value="F:zinc ion binding"/>
    <property type="evidence" value="ECO:0007669"/>
    <property type="project" value="UniProtKB-UniRule"/>
</dbReference>
<dbReference type="GO" id="GO:0006364">
    <property type="term" value="P:rRNA processing"/>
    <property type="evidence" value="ECO:0007669"/>
    <property type="project" value="UniProtKB-UniRule"/>
</dbReference>
<dbReference type="Gene3D" id="3.40.390.30">
    <property type="entry name" value="Metalloproteases ('zincins'), catalytic domain"/>
    <property type="match status" value="1"/>
</dbReference>
<dbReference type="HAMAP" id="MF_00009">
    <property type="entry name" value="Endoribonucl_YbeY"/>
    <property type="match status" value="1"/>
</dbReference>
<dbReference type="InterPro" id="IPR023091">
    <property type="entry name" value="MetalPrtase_cat_dom_sf_prd"/>
</dbReference>
<dbReference type="InterPro" id="IPR002036">
    <property type="entry name" value="YbeY"/>
</dbReference>
<dbReference type="NCBIfam" id="TIGR00043">
    <property type="entry name" value="rRNA maturation RNase YbeY"/>
    <property type="match status" value="1"/>
</dbReference>
<dbReference type="PANTHER" id="PTHR46986">
    <property type="entry name" value="ENDORIBONUCLEASE YBEY, CHLOROPLASTIC"/>
    <property type="match status" value="1"/>
</dbReference>
<dbReference type="PANTHER" id="PTHR46986:SF1">
    <property type="entry name" value="ENDORIBONUCLEASE YBEY, CHLOROPLASTIC"/>
    <property type="match status" value="1"/>
</dbReference>
<dbReference type="Pfam" id="PF02130">
    <property type="entry name" value="YbeY"/>
    <property type="match status" value="1"/>
</dbReference>
<dbReference type="SUPFAM" id="SSF55486">
    <property type="entry name" value="Metalloproteases ('zincins'), catalytic domain"/>
    <property type="match status" value="1"/>
</dbReference>
<protein>
    <recommendedName>
        <fullName evidence="1">Endoribonuclease YbeY</fullName>
        <ecNumber evidence="1">3.1.-.-</ecNumber>
    </recommendedName>
</protein>
<reference key="1">
    <citation type="journal article" date="2008" name="BMC Genomics">
        <title>The linear chromosome of the plant-pathogenic mycoplasma 'Candidatus Phytoplasma mali'.</title>
        <authorList>
            <person name="Kube M."/>
            <person name="Schneider B."/>
            <person name="Kuhl H."/>
            <person name="Dandekar T."/>
            <person name="Heitmann K."/>
            <person name="Migdoll A.M."/>
            <person name="Reinhardt R."/>
            <person name="Seemueller E."/>
        </authorList>
    </citation>
    <scope>NUCLEOTIDE SEQUENCE [LARGE SCALE GENOMIC DNA]</scope>
    <source>
        <strain>AT</strain>
    </source>
</reference>